<comment type="function">
    <text evidence="4 7">Nonribisomal peptide synthetase; part of the gene cluster that mediates the biosynthesis of valactamides (PubMed:28604695). The first step of the pathway is performed by the highly reducing polyketide synthase valA that produces the polyketide part of the final products (Probable). An acetyl starter unit is incorporated by the ketosynthase domain of valA, and subsequently 6 malonyl-CoA-derived ketide units are incorporated and fully reduced to their respective alkane forms by the action of the ketoreductase, dehydratase, and enoylreductase domains (except for the penultimate unit, which is reduced only to the alkene) (Probable). The final five ketide units are each proposed to be alpha-methylated by the methyltransferase domain before ketone reduction by the ketoreductase domain (Probable). The C1 domain of the nonribisomal peptide synthetase valB then catalyzes amide bond formation between the heptaketide chain and L-valine (L-Val) attached to the T1 domain (Probable). The C2 domain incorporating L-isoleucine (L-Ile) then carries out chain elongation, which is followed by macrolactonization by the Ct domain to release the final product (Probable).</text>
</comment>
<comment type="pathway">
    <text evidence="4">Secondary metabolite biosynthesis.</text>
</comment>
<comment type="domain">
    <text evidence="7">NRP synthetases are composed of discrete domains (adenylation (A), thiolation (T) or peptidyl carrier protein (PCP) and condensation (C) domains) which when grouped together are referred to as a single module. Each module is responsible for the recognition (via the A domain) and incorporation of a single amino acid into the growing peptide product. Thus, an NRP synthetase is generally composed of one or more modules and can terminate in a thioesterase domain (TE) that releases the newly synthesized peptide from the enzyme. Occasionally, epimerase (E) domains (responsible for L- to D-amino acid conversion) are present within the NRP synthetase. BenZ as the following bimodular architecture: C1-A1-T1-C2-A2-T2-Ct.</text>
</comment>
<comment type="disruption phenotype">
    <text evidence="4">Abolishes the production of valactamides A-H.</text>
</comment>
<comment type="similarity">
    <text evidence="6">Belongs to the NRP synthetase family.</text>
</comment>
<name>VALB_ASPTE</name>
<protein>
    <recommendedName>
        <fullName evidence="5">Nonribisomal peptide synthetase valB</fullName>
        <shortName evidence="5">NRPS valB</shortName>
        <ecNumber evidence="7">6.3.1.-</ecNumber>
    </recommendedName>
    <alternativeName>
        <fullName evidence="5">Valactamide biosynthesis cluster protein B</fullName>
    </alternativeName>
</protein>
<keyword id="KW-0436">Ligase</keyword>
<keyword id="KW-0596">Phosphopantetheine</keyword>
<keyword id="KW-0597">Phosphoprotein</keyword>
<keyword id="KW-0677">Repeat</keyword>
<feature type="chain" id="PRO_0000450620" description="Nonribisomal peptide synthetase valB">
    <location>
        <begin position="1"/>
        <end position="2637"/>
    </location>
</feature>
<feature type="domain" description="Carrier 1" evidence="2 7">
    <location>
        <begin position="946"/>
        <end position="1022"/>
    </location>
</feature>
<feature type="domain" description="Carrier 2" evidence="2 7">
    <location>
        <begin position="2078"/>
        <end position="2154"/>
    </location>
</feature>
<feature type="region of interest" description="Condensation 1" evidence="1 7">
    <location>
        <begin position="1"/>
        <end position="376"/>
    </location>
</feature>
<feature type="region of interest" description="Adenylation 1" evidence="1 7">
    <location>
        <begin position="413"/>
        <end position="803"/>
    </location>
</feature>
<feature type="region of interest" description="Disordered" evidence="3">
    <location>
        <begin position="1016"/>
        <end position="1045"/>
    </location>
</feature>
<feature type="region of interest" description="Condensation 2" evidence="1 7">
    <location>
        <begin position="1063"/>
        <end position="1506"/>
    </location>
</feature>
<feature type="region of interest" description="Adenylation 2" evidence="1 7">
    <location>
        <begin position="1524"/>
        <end position="1933"/>
    </location>
</feature>
<feature type="region of interest" description="Condensation 3" evidence="1 7">
    <location>
        <begin position="2193"/>
        <end position="2582"/>
    </location>
</feature>
<feature type="modified residue" description="O-(pantetheine 4'-phosphoryl)serine" evidence="2">
    <location>
        <position position="983"/>
    </location>
</feature>
<feature type="modified residue" description="O-(pantetheine 4'-phosphoryl)serine" evidence="2">
    <location>
        <position position="2115"/>
    </location>
</feature>
<evidence type="ECO:0000255" key="1"/>
<evidence type="ECO:0000255" key="2">
    <source>
        <dbReference type="PROSITE-ProRule" id="PRU00258"/>
    </source>
</evidence>
<evidence type="ECO:0000256" key="3">
    <source>
        <dbReference type="SAM" id="MobiDB-lite"/>
    </source>
</evidence>
<evidence type="ECO:0000269" key="4">
    <source>
    </source>
</evidence>
<evidence type="ECO:0000303" key="5">
    <source>
    </source>
</evidence>
<evidence type="ECO:0000305" key="6"/>
<evidence type="ECO:0000305" key="7">
    <source>
    </source>
</evidence>
<reference key="1">
    <citation type="journal article" date="2017" name="Nat. Chem. Biol.">
        <title>A scalable platform to identify fungal secondary metabolites and their gene clusters.</title>
        <authorList>
            <person name="Clevenger K.D."/>
            <person name="Bok J.W."/>
            <person name="Ye R."/>
            <person name="Miley G.P."/>
            <person name="Verdan M.H."/>
            <person name="Velk T."/>
            <person name="Chen C."/>
            <person name="Yang K."/>
            <person name="Robey M.T."/>
            <person name="Gao P."/>
            <person name="Lamprecht M."/>
            <person name="Thomas P.M."/>
            <person name="Islam M.N."/>
            <person name="Palmer J.M."/>
            <person name="Wu C.C."/>
            <person name="Keller N.P."/>
            <person name="Kelleher N.L."/>
        </authorList>
    </citation>
    <scope>NUCLEOTIDE SEQUENCE [GENOMIC DNA]</scope>
    <scope>FUNCTION</scope>
    <scope>DOMAIN</scope>
    <scope>DISRUPTION PHENOTYPE</scope>
    <scope>PATHWAY</scope>
    <source>
        <strain>ATCC 20542 / MF4845</strain>
    </source>
</reference>
<accession>P9WEV1</accession>
<gene>
    <name evidence="5" type="primary">valB</name>
</gene>
<dbReference type="EC" id="6.3.1.-" evidence="7"/>
<dbReference type="EMBL" id="KX449366">
    <property type="protein sequence ID" value="AQM58286.1"/>
    <property type="molecule type" value="Genomic_DNA"/>
</dbReference>
<dbReference type="SMR" id="P9WEV1"/>
<dbReference type="VEuPathDB" id="FungiDB:ATEG_03576"/>
<dbReference type="GO" id="GO:0005737">
    <property type="term" value="C:cytoplasm"/>
    <property type="evidence" value="ECO:0007669"/>
    <property type="project" value="TreeGrafter"/>
</dbReference>
<dbReference type="GO" id="GO:0016874">
    <property type="term" value="F:ligase activity"/>
    <property type="evidence" value="ECO:0007669"/>
    <property type="project" value="UniProtKB-KW"/>
</dbReference>
<dbReference type="GO" id="GO:0031177">
    <property type="term" value="F:phosphopantetheine binding"/>
    <property type="evidence" value="ECO:0007669"/>
    <property type="project" value="InterPro"/>
</dbReference>
<dbReference type="GO" id="GO:0043041">
    <property type="term" value="P:amino acid activation for nonribosomal peptide biosynthetic process"/>
    <property type="evidence" value="ECO:0007669"/>
    <property type="project" value="TreeGrafter"/>
</dbReference>
<dbReference type="GO" id="GO:0044550">
    <property type="term" value="P:secondary metabolite biosynthetic process"/>
    <property type="evidence" value="ECO:0007669"/>
    <property type="project" value="TreeGrafter"/>
</dbReference>
<dbReference type="CDD" id="cd05918">
    <property type="entry name" value="A_NRPS_SidN3_like"/>
    <property type="match status" value="2"/>
</dbReference>
<dbReference type="CDD" id="cd19542">
    <property type="entry name" value="CT_NRPS-like"/>
    <property type="match status" value="2"/>
</dbReference>
<dbReference type="CDD" id="cd19545">
    <property type="entry name" value="FUM14_C_NRPS-like"/>
    <property type="match status" value="1"/>
</dbReference>
<dbReference type="FunFam" id="3.30.300.30:FF:000015">
    <property type="entry name" value="Nonribosomal peptide synthase SidD"/>
    <property type="match status" value="2"/>
</dbReference>
<dbReference type="Gene3D" id="3.30.300.30">
    <property type="match status" value="2"/>
</dbReference>
<dbReference type="Gene3D" id="1.10.1200.10">
    <property type="entry name" value="ACP-like"/>
    <property type="match status" value="2"/>
</dbReference>
<dbReference type="Gene3D" id="3.30.559.10">
    <property type="entry name" value="Chloramphenicol acetyltransferase-like domain"/>
    <property type="match status" value="3"/>
</dbReference>
<dbReference type="Gene3D" id="3.40.50.12780">
    <property type="entry name" value="N-terminal domain of ligase-like"/>
    <property type="match status" value="2"/>
</dbReference>
<dbReference type="Gene3D" id="3.30.559.30">
    <property type="entry name" value="Nonribosomal peptide synthetase, condensation domain"/>
    <property type="match status" value="3"/>
</dbReference>
<dbReference type="InterPro" id="IPR010071">
    <property type="entry name" value="AA_adenyl_dom"/>
</dbReference>
<dbReference type="InterPro" id="IPR036736">
    <property type="entry name" value="ACP-like_sf"/>
</dbReference>
<dbReference type="InterPro" id="IPR045851">
    <property type="entry name" value="AMP-bd_C_sf"/>
</dbReference>
<dbReference type="InterPro" id="IPR020845">
    <property type="entry name" value="AMP-binding_CS"/>
</dbReference>
<dbReference type="InterPro" id="IPR000873">
    <property type="entry name" value="AMP-dep_synth/lig_dom"/>
</dbReference>
<dbReference type="InterPro" id="IPR042099">
    <property type="entry name" value="ANL_N_sf"/>
</dbReference>
<dbReference type="InterPro" id="IPR023213">
    <property type="entry name" value="CAT-like_dom_sf"/>
</dbReference>
<dbReference type="InterPro" id="IPR001242">
    <property type="entry name" value="Condensatn"/>
</dbReference>
<dbReference type="InterPro" id="IPR020806">
    <property type="entry name" value="PKS_PP-bd"/>
</dbReference>
<dbReference type="InterPro" id="IPR009081">
    <property type="entry name" value="PP-bd_ACP"/>
</dbReference>
<dbReference type="InterPro" id="IPR006162">
    <property type="entry name" value="Ppantetheine_attach_site"/>
</dbReference>
<dbReference type="NCBIfam" id="TIGR01733">
    <property type="entry name" value="AA-adenyl-dom"/>
    <property type="match status" value="1"/>
</dbReference>
<dbReference type="PANTHER" id="PTHR45527:SF16">
    <property type="entry name" value="NONRIBOSOMAL PEPTIDE SYNTHASE ATNA-RELATED"/>
    <property type="match status" value="1"/>
</dbReference>
<dbReference type="PANTHER" id="PTHR45527">
    <property type="entry name" value="NONRIBOSOMAL PEPTIDE SYNTHETASE"/>
    <property type="match status" value="1"/>
</dbReference>
<dbReference type="Pfam" id="PF00501">
    <property type="entry name" value="AMP-binding"/>
    <property type="match status" value="2"/>
</dbReference>
<dbReference type="Pfam" id="PF00668">
    <property type="entry name" value="Condensation"/>
    <property type="match status" value="3"/>
</dbReference>
<dbReference type="Pfam" id="PF00550">
    <property type="entry name" value="PP-binding"/>
    <property type="match status" value="2"/>
</dbReference>
<dbReference type="SMART" id="SM00823">
    <property type="entry name" value="PKS_PP"/>
    <property type="match status" value="2"/>
</dbReference>
<dbReference type="SUPFAM" id="SSF56801">
    <property type="entry name" value="Acetyl-CoA synthetase-like"/>
    <property type="match status" value="2"/>
</dbReference>
<dbReference type="SUPFAM" id="SSF47336">
    <property type="entry name" value="ACP-like"/>
    <property type="match status" value="2"/>
</dbReference>
<dbReference type="SUPFAM" id="SSF52777">
    <property type="entry name" value="CoA-dependent acyltransferases"/>
    <property type="match status" value="6"/>
</dbReference>
<dbReference type="PROSITE" id="PS00455">
    <property type="entry name" value="AMP_BINDING"/>
    <property type="match status" value="2"/>
</dbReference>
<dbReference type="PROSITE" id="PS50075">
    <property type="entry name" value="CARRIER"/>
    <property type="match status" value="2"/>
</dbReference>
<dbReference type="PROSITE" id="PS00012">
    <property type="entry name" value="PHOSPHOPANTETHEINE"/>
    <property type="match status" value="1"/>
</dbReference>
<sequence length="2637" mass="288817">MADGADYTQRNIHSLDSSLDLDRFCASLHQVVASNQILRTRIVDCPLGLVQVIVKSEAFIDCLSRPCNADVEQYLRQDEMSPMHLGMPLARFAIVGRKLVTTIHHAIADSHSLLYLYEDAWKIYQGESPPPRAPFREFVDYCKSIDSKSAAAFWKSQFSESAPGVFPTVPSGHLIKASQTAAHTISLAKKPPLPLLPAYIEAAWAMTAADYTGSENVVFGYVMSGRTAIGGAETTLGPTISTVPMQVQLNASASIEQLLKSRTQFRRSLLASPFLQYGLANIRHTVSDEAHVASGFQTLLDILSVDETQANAPGLTLERTIHTYVHGLTLMCKIAGEDILVRADFDSIVLPDAQVQRILRQMEHRLKALIRSPPSTELRNLSPLNLSDTIEILDWNSDVPDAVNQCVHDIFTSQASRRPDAAAVHAWDGQATYHELDVMSDNLAHELLLRKISPEVPIAFTLERSLSAVVAVLGIMKAGGACLPIELSFPRARKDAIVRVVGARLIVTSSTHEAVEGCESIILDLHRVAHRGVDIRRRINRDPARAAYILFTSGSTGEPKGVVLEHRSLATSYTAICNRVGWSSGTRILQFSSPAWDAFALEVLGPLMVGGCICIPSNISRESALGEYINSARVDSVLQTPTALRNLTPDDMLPSLKSLLVGGEPIPENAYKTWGSKVRLYNIWAPCETSTISTIADLSPLSVYPTSIGTPVGSAVWIVDRDDPSKLLPIGAVGEMLVEGPGVARGYHNNPTQTAPSFISPPPFIPMRPNASSPKVYRTGDLARYNPDGSIAFVGRRDNQIKLRGQRFEMEDVEQVLGRHGCTCAVAVVNFKLPRQEREDLVAFVTLSAVPGYHPSPQSTDDELPAVPLNEDIRNQLQTLHDFTRGQLPPYMVPTAWVVVRHLPKLTSTKIDRVKLRQWLHEVDLSSARVIMRQFGDGRRTHGLTPPANPPERALQLAWSSVLGVEEGHIGRESSFLSLGGDSITAMQVASRCHKQGFSIRSTALLRAGTLAEAASEIKEPTDASAPSPSPISRDLPLQKSNHDRGLQGHLHPTSLCVPRDNVEAIYPCTALQEGLLLARMKHNGDEREYNNRFAFRLTTRCGIKVDITRVSNAWKALCAAHPILRTIFVPGLSQNGAFQQIVLKDSAPSISIHRVQANCSDTTELFRHQERLPFAHTQPPHRLSLYEGVGKAVYAILEISHAIFDARTLRIILANIATGYTSCRAIKKGRSFSDYVAREQEREEVGRQYWKTYLAGAQPCILPRDSAMEETSSSIRGLEVPCQNAPGLLAFCRSQGVTIANFIQAAWGVVLQLYTGLSSVYFGCSRSDQDRLDGGEDILGPLITMMVCKFSFEDRSVSGVHLLQIAREDAARGMEQPGCSLSRLHDDLALSNSPLFDTIMTVAHAWPTDLAPGEGDLVIEHTDSEGTTEYSIIVTVGYSKDSLNIHLAYQRARLSDSLVECIARTFAQVITRIIASPEESVLQALQPERPESCLTLSRADMSLLQRWNTPAPLAFKECFPQRAREVAHQRPLAPAVCSWDQNLDYCQLDLLSDYLAHKIIAQYGIGAEAVVPFACEKAASAIVILLAISKTGAAFLPLDITHPPERLATVVADSGASLIIVNTPELRNKMAAWTRQSIFLARLDDIVEETSVEQTLKIRSDLKSVTIEPSNAAYVVYTSGSTGKPKGVLVEHGNLAVGAEEHARRIGITARSRVLQLASFAFDLAIGDVVYALCSGACLCVPSESDRNGNIAGVINRLHANFLFTTPTQLSVLTPEEVPTLRTVSVGGEPVGRQIIETWTPHVRLVIPYGPVETTIIVSCRDVTSGDQDGRDIGHPSSCRFWVVDPDNRDSLVPIGTPGELVIEGPVVARGYLHTSDATGSAFIDPPAWSNAQEFASLNLASRRFYKTGDLVTQVGEKSFLIEGRKDTRVKLHGQRVELGEIEYHLSHRVEPGWHWAVDIIQPRGGKDPCLAAFFVTDKSNIMETPTPASGHELLEPLAEHASAAKETLKHVLPAYMVPEYFIRIRALPMLSSLKTDRKALRTMAAGLSRAELLAYRVRESVSNIGHAHSNPAKTQKEVTDDQAFMQQAWADVLGISSDEIGCGDNFFDIGGNSIRAIHLIARLRKSGHKLSVEEVFRARTLAYMVSKTSVSNAQSGDQPTSTPPAALDTESIPHLMHLAEKFPWLQRDNIESVAPATDAQAWMLDVSERAGRGFDNGLTLIPLPGHALSRPKLQRACQEVLRQHPILRTVFVCCESQVLQVALRKPPIEQVHTDKGPPKLSSSSILNRLPTFYLTSDSGSTSCRSLELRIHHALYDAISLGHLLDDLGAAYKGRDLVTRPTQYHEWISHIKAKETTDTYIFWRELLRGSMPRSLVSRRSNWSAPGNPTDSKICFKTRVDAIPVSYGTDATVFNAAWSLVLSQVLEKQDVVFGYISANRSCALPGVDQIVGPCINILPVHARCNGDITAASLVAELQRQSTDSIPHQHVGLLSILKNSTDWPKGTLNSLVAFQNHEAIDDIVKLGDVDCALSANGRVGNSAEVCLGIEPQPDGQVGITLQYSSVSMPHEKVLWMGAYLDAALHAFPTHWTKTIDQLRHHIDANCNFPRPPENGELKGGAIPHNNAGTGRFIIEAAS</sequence>
<proteinExistence type="inferred from homology"/>
<organism>
    <name type="scientific">Aspergillus terreus</name>
    <dbReference type="NCBI Taxonomy" id="33178"/>
    <lineage>
        <taxon>Eukaryota</taxon>
        <taxon>Fungi</taxon>
        <taxon>Dikarya</taxon>
        <taxon>Ascomycota</taxon>
        <taxon>Pezizomycotina</taxon>
        <taxon>Eurotiomycetes</taxon>
        <taxon>Eurotiomycetidae</taxon>
        <taxon>Eurotiales</taxon>
        <taxon>Aspergillaceae</taxon>
        <taxon>Aspergillus</taxon>
        <taxon>Aspergillus subgen. Circumdati</taxon>
    </lineage>
</organism>